<keyword id="KW-0067">ATP-binding</keyword>
<keyword id="KW-0997">Cell inner membrane</keyword>
<keyword id="KW-1003">Cell membrane</keyword>
<keyword id="KW-0472">Membrane</keyword>
<keyword id="KW-0547">Nucleotide-binding</keyword>
<keyword id="KW-0762">Sugar transport</keyword>
<keyword id="KW-1278">Translocase</keyword>
<keyword id="KW-0813">Transport</keyword>
<dbReference type="EC" id="7.5.2.1" evidence="1"/>
<dbReference type="EMBL" id="CP000026">
    <property type="protein sequence ID" value="AAV79793.1"/>
    <property type="molecule type" value="Genomic_DNA"/>
</dbReference>
<dbReference type="RefSeq" id="WP_000179180.1">
    <property type="nucleotide sequence ID" value="NC_006511.1"/>
</dbReference>
<dbReference type="SMR" id="Q5PKZ8"/>
<dbReference type="KEGG" id="spt:SPA4047"/>
<dbReference type="HOGENOM" id="CLU_000604_1_1_6"/>
<dbReference type="Proteomes" id="UP000008185">
    <property type="component" value="Chromosome"/>
</dbReference>
<dbReference type="GO" id="GO:0055052">
    <property type="term" value="C:ATP-binding cassette (ABC) transporter complex, substrate-binding subunit-containing"/>
    <property type="evidence" value="ECO:0007669"/>
    <property type="project" value="TreeGrafter"/>
</dbReference>
<dbReference type="GO" id="GO:1990060">
    <property type="term" value="C:maltose transport complex"/>
    <property type="evidence" value="ECO:0007669"/>
    <property type="project" value="TreeGrafter"/>
</dbReference>
<dbReference type="GO" id="GO:0015423">
    <property type="term" value="F:ABC-type maltose transporter activity"/>
    <property type="evidence" value="ECO:0007669"/>
    <property type="project" value="UniProtKB-EC"/>
</dbReference>
<dbReference type="GO" id="GO:0005524">
    <property type="term" value="F:ATP binding"/>
    <property type="evidence" value="ECO:0007669"/>
    <property type="project" value="UniProtKB-KW"/>
</dbReference>
<dbReference type="GO" id="GO:0016887">
    <property type="term" value="F:ATP hydrolysis activity"/>
    <property type="evidence" value="ECO:0007669"/>
    <property type="project" value="InterPro"/>
</dbReference>
<dbReference type="CDD" id="cd03301">
    <property type="entry name" value="ABC_MalK_N"/>
    <property type="match status" value="1"/>
</dbReference>
<dbReference type="FunFam" id="3.40.50.300:FF:000042">
    <property type="entry name" value="Maltose/maltodextrin ABC transporter, ATP-binding protein"/>
    <property type="match status" value="1"/>
</dbReference>
<dbReference type="FunFam" id="2.40.50.100:FF:000014">
    <property type="entry name" value="Maltose/maltodextrin import ATP-binding protein MalK"/>
    <property type="match status" value="1"/>
</dbReference>
<dbReference type="FunFam" id="2.40.50.140:FF:000070">
    <property type="entry name" value="Maltose/maltodextrin import ATP-binding protein MalK"/>
    <property type="match status" value="1"/>
</dbReference>
<dbReference type="Gene3D" id="2.40.50.100">
    <property type="match status" value="1"/>
</dbReference>
<dbReference type="Gene3D" id="2.40.50.140">
    <property type="entry name" value="Nucleic acid-binding proteins"/>
    <property type="match status" value="1"/>
</dbReference>
<dbReference type="Gene3D" id="3.40.50.300">
    <property type="entry name" value="P-loop containing nucleotide triphosphate hydrolases"/>
    <property type="match status" value="1"/>
</dbReference>
<dbReference type="InterPro" id="IPR003593">
    <property type="entry name" value="AAA+_ATPase"/>
</dbReference>
<dbReference type="InterPro" id="IPR003439">
    <property type="entry name" value="ABC_transporter-like_ATP-bd"/>
</dbReference>
<dbReference type="InterPro" id="IPR017871">
    <property type="entry name" value="ABC_transporter-like_CS"/>
</dbReference>
<dbReference type="InterPro" id="IPR015855">
    <property type="entry name" value="ABC_transpr_MalK-like"/>
</dbReference>
<dbReference type="InterPro" id="IPR047641">
    <property type="entry name" value="ABC_transpr_MalK/UgpC-like"/>
</dbReference>
<dbReference type="InterPro" id="IPR008995">
    <property type="entry name" value="Mo/tungstate-bd_C_term_dom"/>
</dbReference>
<dbReference type="InterPro" id="IPR012340">
    <property type="entry name" value="NA-bd_OB-fold"/>
</dbReference>
<dbReference type="InterPro" id="IPR027417">
    <property type="entry name" value="P-loop_NTPase"/>
</dbReference>
<dbReference type="InterPro" id="IPR013611">
    <property type="entry name" value="Transp-assoc_OB_typ2"/>
</dbReference>
<dbReference type="NCBIfam" id="NF008233">
    <property type="entry name" value="PRK11000.1"/>
    <property type="match status" value="1"/>
</dbReference>
<dbReference type="NCBIfam" id="NF008653">
    <property type="entry name" value="PRK11650.1"/>
    <property type="match status" value="1"/>
</dbReference>
<dbReference type="PANTHER" id="PTHR43875">
    <property type="entry name" value="MALTODEXTRIN IMPORT ATP-BINDING PROTEIN MSMX"/>
    <property type="match status" value="1"/>
</dbReference>
<dbReference type="PANTHER" id="PTHR43875:SF3">
    <property type="entry name" value="MALTOSE_MALTODEXTRIN IMPORT ATP-BINDING PROTEIN MALK"/>
    <property type="match status" value="1"/>
</dbReference>
<dbReference type="Pfam" id="PF00005">
    <property type="entry name" value="ABC_tran"/>
    <property type="match status" value="1"/>
</dbReference>
<dbReference type="Pfam" id="PF08402">
    <property type="entry name" value="TOBE_2"/>
    <property type="match status" value="1"/>
</dbReference>
<dbReference type="SMART" id="SM00382">
    <property type="entry name" value="AAA"/>
    <property type="match status" value="1"/>
</dbReference>
<dbReference type="SUPFAM" id="SSF50331">
    <property type="entry name" value="MOP-like"/>
    <property type="match status" value="1"/>
</dbReference>
<dbReference type="SUPFAM" id="SSF52540">
    <property type="entry name" value="P-loop containing nucleoside triphosphate hydrolases"/>
    <property type="match status" value="1"/>
</dbReference>
<dbReference type="PROSITE" id="PS00211">
    <property type="entry name" value="ABC_TRANSPORTER_1"/>
    <property type="match status" value="1"/>
</dbReference>
<dbReference type="PROSITE" id="PS50893">
    <property type="entry name" value="ABC_TRANSPORTER_2"/>
    <property type="match status" value="1"/>
</dbReference>
<dbReference type="PROSITE" id="PS51245">
    <property type="entry name" value="MALK"/>
    <property type="match status" value="1"/>
</dbReference>
<accession>Q5PKZ8</accession>
<comment type="function">
    <text evidence="1">Part of the ABC transporter complex MalEFGK involved in maltose/maltodextrin import. Responsible for energy coupling to the transport system.</text>
</comment>
<comment type="catalytic activity">
    <reaction evidence="1">
        <text>D-maltose(out) + ATP + H2O = D-maltose(in) + ADP + phosphate + H(+)</text>
        <dbReference type="Rhea" id="RHEA:22132"/>
        <dbReference type="ChEBI" id="CHEBI:15377"/>
        <dbReference type="ChEBI" id="CHEBI:15378"/>
        <dbReference type="ChEBI" id="CHEBI:17306"/>
        <dbReference type="ChEBI" id="CHEBI:30616"/>
        <dbReference type="ChEBI" id="CHEBI:43474"/>
        <dbReference type="ChEBI" id="CHEBI:456216"/>
        <dbReference type="EC" id="7.5.2.1"/>
    </reaction>
</comment>
<comment type="subunit">
    <text evidence="1">The complex is composed of two ATP-binding proteins (MalK), two transmembrane proteins (MalG and MalK) and a solute-binding protein (MalE).</text>
</comment>
<comment type="subcellular location">
    <subcellularLocation>
        <location evidence="1">Cell inner membrane</location>
        <topology evidence="1">Peripheral membrane protein</topology>
    </subcellularLocation>
</comment>
<comment type="similarity">
    <text evidence="1">Belongs to the ABC transporter superfamily. Maltooligosaccharide importer (TC 3.A.1.1.1) family.</text>
</comment>
<protein>
    <recommendedName>
        <fullName evidence="1">Maltose/maltodextrin import ATP-binding protein MalK</fullName>
        <ecNumber evidence="1">7.5.2.1</ecNumber>
    </recommendedName>
</protein>
<gene>
    <name evidence="1" type="primary">malK</name>
    <name type="ordered locus">SPA4047</name>
</gene>
<feature type="chain" id="PRO_0000273998" description="Maltose/maltodextrin import ATP-binding protein MalK">
    <location>
        <begin position="1"/>
        <end position="369"/>
    </location>
</feature>
<feature type="domain" description="ABC transporter" evidence="1">
    <location>
        <begin position="4"/>
        <end position="234"/>
    </location>
</feature>
<feature type="binding site" evidence="1">
    <location>
        <begin position="36"/>
        <end position="43"/>
    </location>
    <ligand>
        <name>ATP</name>
        <dbReference type="ChEBI" id="CHEBI:30616"/>
    </ligand>
</feature>
<evidence type="ECO:0000255" key="1">
    <source>
        <dbReference type="HAMAP-Rule" id="MF_01709"/>
    </source>
</evidence>
<proteinExistence type="inferred from homology"/>
<sequence>MASVQLRNVTKAWGDVVVSKDINLDIHDGEFVVFVGPSGCGKSTLLRMIAGLETITSGDLFIGETRMNDIPPVERGVGMVFQSYALYPHLSVAENMSFGLKLAGAKKEVMNQRVNQVAEVLQLAHLLERKPKALSGGQRQRVAIGRTLVAEPRVFLLDEPLSNLDAALRVQMRIEISRLHKRLGRTMIYVTHDQVEAMTLADKIVVLDAGRVAQVGKPLELYHYPADRFVAGFIGSPKMNFLPVKVTATAIEQVQVELPNRQQIWLPVESRGVQVGANMSLGIRPEHLLPSDIADVTLEGEVQVVEQLGHETQIHIQIPAIRQNLVYRQNDVVLVEEGATFAIGLPPERCHLFREDGSACRRLHQEPGV</sequence>
<reference key="1">
    <citation type="journal article" date="2004" name="Nat. Genet.">
        <title>Comparison of genome degradation in Paratyphi A and Typhi, human-restricted serovars of Salmonella enterica that cause typhoid.</title>
        <authorList>
            <person name="McClelland M."/>
            <person name="Sanderson K.E."/>
            <person name="Clifton S.W."/>
            <person name="Latreille P."/>
            <person name="Porwollik S."/>
            <person name="Sabo A."/>
            <person name="Meyer R."/>
            <person name="Bieri T."/>
            <person name="Ozersky P."/>
            <person name="McLellan M."/>
            <person name="Harkins C.R."/>
            <person name="Wang C."/>
            <person name="Nguyen C."/>
            <person name="Berghoff A."/>
            <person name="Elliott G."/>
            <person name="Kohlberg S."/>
            <person name="Strong C."/>
            <person name="Du F."/>
            <person name="Carter J."/>
            <person name="Kremizki C."/>
            <person name="Layman D."/>
            <person name="Leonard S."/>
            <person name="Sun H."/>
            <person name="Fulton L."/>
            <person name="Nash W."/>
            <person name="Miner T."/>
            <person name="Minx P."/>
            <person name="Delehaunty K."/>
            <person name="Fronick C."/>
            <person name="Magrini V."/>
            <person name="Nhan M."/>
            <person name="Warren W."/>
            <person name="Florea L."/>
            <person name="Spieth J."/>
            <person name="Wilson R.K."/>
        </authorList>
    </citation>
    <scope>NUCLEOTIDE SEQUENCE [LARGE SCALE GENOMIC DNA]</scope>
    <source>
        <strain>ATCC 9150 / SARB42</strain>
    </source>
</reference>
<organism>
    <name type="scientific">Salmonella paratyphi A (strain ATCC 9150 / SARB42)</name>
    <dbReference type="NCBI Taxonomy" id="295319"/>
    <lineage>
        <taxon>Bacteria</taxon>
        <taxon>Pseudomonadati</taxon>
        <taxon>Pseudomonadota</taxon>
        <taxon>Gammaproteobacteria</taxon>
        <taxon>Enterobacterales</taxon>
        <taxon>Enterobacteriaceae</taxon>
        <taxon>Salmonella</taxon>
    </lineage>
</organism>
<name>MALK_SALPA</name>